<organism>
    <name type="scientific">Homo sapiens</name>
    <name type="common">Human</name>
    <dbReference type="NCBI Taxonomy" id="9606"/>
    <lineage>
        <taxon>Eukaryota</taxon>
        <taxon>Metazoa</taxon>
        <taxon>Chordata</taxon>
        <taxon>Craniata</taxon>
        <taxon>Vertebrata</taxon>
        <taxon>Euteleostomi</taxon>
        <taxon>Mammalia</taxon>
        <taxon>Eutheria</taxon>
        <taxon>Euarchontoglires</taxon>
        <taxon>Primates</taxon>
        <taxon>Haplorrhini</taxon>
        <taxon>Catarrhini</taxon>
        <taxon>Hominidae</taxon>
        <taxon>Homo</taxon>
    </lineage>
</organism>
<feature type="chain" id="PRO_0000008518" description="Endogenous retrovirus group K member 5 Env polyprotein">
    <location>
        <begin position="1"/>
        <end position="245"/>
    </location>
</feature>
<feature type="region of interest" description="Truncated surface protein" evidence="1">
    <location>
        <begin position="1"/>
        <end position="245"/>
    </location>
</feature>
<keyword id="KW-0895">ERV</keyword>
<keyword id="KW-1185">Reference proteome</keyword>
<keyword id="KW-0814">Transposable element</keyword>
<keyword id="KW-0261">Viral envelope protein</keyword>
<keyword id="KW-0946">Virion</keyword>
<proteinExistence type="evidence at transcript level"/>
<reference key="1">
    <citation type="journal article" date="2001" name="Genomics">
        <title>Transcriptionally active HERV-K genes: identification, isolation, and chromosomal mapping.</title>
        <authorList>
            <person name="Sugimoto J."/>
            <person name="Matsuura N."/>
            <person name="Kinjo Y."/>
            <person name="Takasu N."/>
            <person name="Oda T."/>
            <person name="Jinno Y."/>
        </authorList>
    </citation>
    <scope>NUCLEOTIDE SEQUENCE [GENOMIC DNA]</scope>
</reference>
<reference key="2">
    <citation type="journal article" date="2003" name="Oncogene">
        <title>Quantitation of HERV-K env gene expression and splicing in human breast cancer.</title>
        <authorList>
            <person name="Wang-Johanning F."/>
            <person name="Frost A.R."/>
            <person name="Jian B."/>
            <person name="Epp L."/>
            <person name="Lu D.W."/>
            <person name="Johanning G.L."/>
        </authorList>
    </citation>
    <scope>SUBGENOMIC RNA</scope>
</reference>
<gene>
    <name type="primary">ERVK-5</name>
    <name type="synonym">ERVK5</name>
</gene>
<protein>
    <recommendedName>
        <fullName>Endogenous retrovirus group K member 5 Env polyprotein</fullName>
    </recommendedName>
    <alternativeName>
        <fullName>Envelope polyprotein</fullName>
    </alternativeName>
    <alternativeName>
        <fullName>HERV-K(II) envelope protein</fullName>
    </alternativeName>
    <alternativeName>
        <fullName>HERV-K_3q12.3 provirus ancestral Env polyprotein</fullName>
    </alternativeName>
    <domain>
        <recommendedName>
            <fullName>Truncated surface protein</fullName>
            <shortName>SU</shortName>
        </recommendedName>
    </domain>
</protein>
<comment type="function">
    <text>Retroviral envelope proteins mediate receptor recognition and membrane fusion during early infection. Endogenous envelope proteins may have kept, lost or modified their original function during evolution.</text>
</comment>
<comment type="subcellular location">
    <subcellularLocation>
        <location>Virion</location>
    </subcellularLocation>
</comment>
<comment type="tissue specificity">
    <text>Expressed in lung, placenta, testis, peripheral blood lymphocytes, and teratocarcinoma cell lines.</text>
</comment>
<comment type="miscellaneous">
    <text>Has a type 1 genome. The HERV-K(HML-2) family contains type 1 and type 2 genomes depending on the absence or presence of 292 nucleotides at the 5'-end of the env gene resulting in Env proteins of distinct sizes. Despite their overall retroviral envelope structure HERV-K(HML-2) type 1 envelope proteins lack a predictable signal sequence. Subgenomic RNA transcripts coding for full-length envelope proteins have been detected for both type of genomes.</text>
</comment>
<comment type="miscellaneous">
    <text>Intergenic, closest flanking genes being RPL24 and FLJ23047.</text>
</comment>
<comment type="similarity">
    <text evidence="2">Belongs to the beta type-B retroviral envelope protein family. HERV class-II K(HML-2) env subfamily.</text>
</comment>
<comment type="caution">
    <text evidence="2">No predictable signal peptide.</text>
</comment>
<comment type="caution">
    <text evidence="2">Truncated; premature stop codon in the surface protein.</text>
</comment>
<evidence type="ECO:0000250" key="1"/>
<evidence type="ECO:0000305" key="2"/>
<sequence length="245" mass="27904">MVTPVTWMDNPIEVYVNDSVWVPGPTDDRCPAKPEEEGMMINISIVYRYPPICLGRAPGCLMPAVQNWLVEVPTVSPNSRFTYHMVSGMSLRPRVNYLQDFSYQRSLKFRPKGKPCPKEIPKESKNTEVLVWEECVANSAVILQNNEFGTIIDWAPRGQFYHNCSGQTQSCPSAQVSPAVDSDLTESLDKHKHKKLQSFYPWEWGEKGISTPRPEIISPVSGPEHPELWRLWPDTTLEFGLEIKL</sequence>
<dbReference type="EMBL" id="AB047240">
    <property type="protein sequence ID" value="BAB11760.1"/>
    <property type="molecule type" value="Genomic_DNA"/>
</dbReference>
<dbReference type="BioMuta" id="HGNC:13757"/>
<dbReference type="DMDM" id="47605745"/>
<dbReference type="MassIVE" id="Q9HDB8"/>
<dbReference type="PeptideAtlas" id="Q9HDB8"/>
<dbReference type="AGR" id="HGNC:13757"/>
<dbReference type="GeneCards" id="ERVK-5"/>
<dbReference type="HGNC" id="HGNC:13757">
    <property type="gene designation" value="ERVK-5"/>
</dbReference>
<dbReference type="neXtProt" id="NX_Q9HDB8"/>
<dbReference type="PhylomeDB" id="Q9HDB8"/>
<dbReference type="Pharos" id="Q9HDB8">
    <property type="development level" value="Tdark"/>
</dbReference>
<dbReference type="Proteomes" id="UP000005640">
    <property type="component" value="Unplaced"/>
</dbReference>
<dbReference type="InterPro" id="IPR029104">
    <property type="entry name" value="HERV-K_env"/>
</dbReference>
<dbReference type="InterPro" id="IPR051255">
    <property type="entry name" value="Retroviral_env_glycoprotein"/>
</dbReference>
<dbReference type="PANTHER" id="PTHR34313">
    <property type="entry name" value="ENDOGENOUS RETROVIRUS GROUP K MEMBER 113 ENV POLYPROTEIN-RELATED"/>
    <property type="match status" value="1"/>
</dbReference>
<dbReference type="PANTHER" id="PTHR34313:SF3">
    <property type="entry name" value="ENDOGENOUS RETROVIRUS GROUP K MEMBER 113 ENV POLYPROTEIN-RELATED"/>
    <property type="match status" value="1"/>
</dbReference>
<dbReference type="Pfam" id="PF13804">
    <property type="entry name" value="HERV-K_env_2"/>
    <property type="match status" value="1"/>
</dbReference>
<accession>Q9HDB8</accession>
<name>ENK5_HUMAN</name>